<organism>
    <name type="scientific">Ureaplasma parvum serovar 3 (strain ATCC 700970)</name>
    <dbReference type="NCBI Taxonomy" id="273119"/>
    <lineage>
        <taxon>Bacteria</taxon>
        <taxon>Bacillati</taxon>
        <taxon>Mycoplasmatota</taxon>
        <taxon>Mycoplasmoidales</taxon>
        <taxon>Mycoplasmoidaceae</taxon>
        <taxon>Ureaplasma</taxon>
    </lineage>
</organism>
<sequence>MANEVRVARLESLIKDVINNALANEINDKIAKLARVTAVRLSNDLSVAKIFLDAHKRESMLKVLENVNKVSGLLRSKLAAEWTSYKVPELRFVIDETIDYANHIDELFKKIKQQEN</sequence>
<evidence type="ECO:0000255" key="1">
    <source>
        <dbReference type="HAMAP-Rule" id="MF_00003"/>
    </source>
</evidence>
<dbReference type="EMBL" id="AF222894">
    <property type="protein sequence ID" value="AAF30730.1"/>
    <property type="molecule type" value="Genomic_DNA"/>
</dbReference>
<dbReference type="RefSeq" id="WP_006688602.1">
    <property type="nucleotide sequence ID" value="NC_002162.1"/>
</dbReference>
<dbReference type="SMR" id="Q9PQH0"/>
<dbReference type="STRING" id="273119.UU321"/>
<dbReference type="EnsemblBacteria" id="AAF30730">
    <property type="protein sequence ID" value="AAF30730"/>
    <property type="gene ID" value="UU321"/>
</dbReference>
<dbReference type="GeneID" id="29672463"/>
<dbReference type="KEGG" id="uur:UU321"/>
<dbReference type="eggNOG" id="COG0858">
    <property type="taxonomic scope" value="Bacteria"/>
</dbReference>
<dbReference type="HOGENOM" id="CLU_089475_3_2_14"/>
<dbReference type="OrthoDB" id="384689at2"/>
<dbReference type="Proteomes" id="UP000000423">
    <property type="component" value="Chromosome"/>
</dbReference>
<dbReference type="GO" id="GO:0005829">
    <property type="term" value="C:cytosol"/>
    <property type="evidence" value="ECO:0007669"/>
    <property type="project" value="TreeGrafter"/>
</dbReference>
<dbReference type="GO" id="GO:0043024">
    <property type="term" value="F:ribosomal small subunit binding"/>
    <property type="evidence" value="ECO:0007669"/>
    <property type="project" value="TreeGrafter"/>
</dbReference>
<dbReference type="GO" id="GO:0030490">
    <property type="term" value="P:maturation of SSU-rRNA"/>
    <property type="evidence" value="ECO:0007669"/>
    <property type="project" value="UniProtKB-UniRule"/>
</dbReference>
<dbReference type="Gene3D" id="3.30.300.20">
    <property type="match status" value="1"/>
</dbReference>
<dbReference type="HAMAP" id="MF_00003">
    <property type="entry name" value="RbfA"/>
    <property type="match status" value="1"/>
</dbReference>
<dbReference type="InterPro" id="IPR015946">
    <property type="entry name" value="KH_dom-like_a/b"/>
</dbReference>
<dbReference type="InterPro" id="IPR000238">
    <property type="entry name" value="RbfA"/>
</dbReference>
<dbReference type="InterPro" id="IPR023799">
    <property type="entry name" value="RbfA_dom_sf"/>
</dbReference>
<dbReference type="NCBIfam" id="TIGR00082">
    <property type="entry name" value="rbfA"/>
    <property type="match status" value="1"/>
</dbReference>
<dbReference type="PANTHER" id="PTHR33515">
    <property type="entry name" value="RIBOSOME-BINDING FACTOR A, CHLOROPLASTIC-RELATED"/>
    <property type="match status" value="1"/>
</dbReference>
<dbReference type="PANTHER" id="PTHR33515:SF1">
    <property type="entry name" value="RIBOSOME-BINDING FACTOR A, CHLOROPLASTIC-RELATED"/>
    <property type="match status" value="1"/>
</dbReference>
<dbReference type="Pfam" id="PF02033">
    <property type="entry name" value="RBFA"/>
    <property type="match status" value="1"/>
</dbReference>
<dbReference type="SUPFAM" id="SSF89919">
    <property type="entry name" value="Ribosome-binding factor A, RbfA"/>
    <property type="match status" value="1"/>
</dbReference>
<comment type="function">
    <text evidence="1">One of several proteins that assist in the late maturation steps of the functional core of the 30S ribosomal subunit. Associates with free 30S ribosomal subunits (but not with 30S subunits that are part of 70S ribosomes or polysomes). Required for efficient processing of 16S rRNA. May interact with the 5'-terminal helix region of 16S rRNA.</text>
</comment>
<comment type="subunit">
    <text evidence="1">Monomer. Binds 30S ribosomal subunits, but not 50S ribosomal subunits or 70S ribosomes.</text>
</comment>
<comment type="subcellular location">
    <subcellularLocation>
        <location evidence="1">Cytoplasm</location>
    </subcellularLocation>
</comment>
<comment type="similarity">
    <text evidence="1">Belongs to the RbfA family.</text>
</comment>
<name>RBFA_UREPA</name>
<accession>Q9PQH0</accession>
<gene>
    <name evidence="1" type="primary">rbfA</name>
    <name type="ordered locus">UU321</name>
</gene>
<keyword id="KW-0963">Cytoplasm</keyword>
<keyword id="KW-1185">Reference proteome</keyword>
<keyword id="KW-0690">Ribosome biogenesis</keyword>
<feature type="chain" id="PRO_0000102764" description="Ribosome-binding factor A">
    <location>
        <begin position="1"/>
        <end position="116"/>
    </location>
</feature>
<proteinExistence type="inferred from homology"/>
<protein>
    <recommendedName>
        <fullName evidence="1">Ribosome-binding factor A</fullName>
    </recommendedName>
</protein>
<reference key="1">
    <citation type="journal article" date="2000" name="Nature">
        <title>The complete sequence of the mucosal pathogen Ureaplasma urealyticum.</title>
        <authorList>
            <person name="Glass J.I."/>
            <person name="Lefkowitz E.J."/>
            <person name="Glass J.S."/>
            <person name="Heiner C.R."/>
            <person name="Chen E.Y."/>
            <person name="Cassell G.H."/>
        </authorList>
    </citation>
    <scope>NUCLEOTIDE SEQUENCE [LARGE SCALE GENOMIC DNA]</scope>
    <source>
        <strain>ATCC 700970</strain>
    </source>
</reference>